<reference key="1">
    <citation type="submission" date="2002-09" db="EMBL/GenBank/DDBJ databases">
        <title>Distribution of Hepatitis B Virus (HBV) genotypes among HBV carriers in Cote d'Ivoire: complete genome sequence and phylogenetic relatedness of HBV Genotype E.</title>
        <authorList>
            <person name="Suzuki S."/>
            <person name="Sugauchi F."/>
            <person name="Orito E."/>
            <person name="Kato H."/>
            <person name="Usuda S."/>
            <person name="Siransy L."/>
            <person name="Arita I."/>
            <person name="Sakamoto Y."/>
            <person name="Yoshihara N."/>
            <person name="El-Gohary A."/>
            <person name="Ueda R."/>
            <person name="Mizokami M."/>
        </authorList>
    </citation>
    <scope>NUCLEOTIDE SEQUENCE [GENOMIC DNA]</scope>
</reference>
<reference key="2">
    <citation type="journal article" date="1996" name="Intervirology">
        <title>Functions of the large hepatitis B virus surface protein in viral particle morphogenesis.</title>
        <authorList>
            <person name="Bruss V."/>
            <person name="Gerhardt E."/>
            <person name="Vieluf K."/>
            <person name="Wunderlich G."/>
        </authorList>
    </citation>
    <scope>REVIEW</scope>
</reference>
<reference key="3">
    <citation type="journal article" date="1998" name="Adv. Exp. Med. Biol.">
        <title>Role of glycan processing in hepatitis B virus envelope protein trafficking.</title>
        <authorList>
            <person name="Block T.M."/>
            <person name="Lu X."/>
            <person name="Mehta A."/>
            <person name="Park J."/>
            <person name="Blumberg B.S."/>
            <person name="Dwek R."/>
        </authorList>
    </citation>
    <scope>REVIEW</scope>
</reference>
<reference key="4">
    <citation type="journal article" date="2004" name="Virus Res.">
        <title>Envelopment of the hepatitis B virus nucleocapsid.</title>
        <authorList>
            <person name="Bruss V."/>
        </authorList>
    </citation>
    <scope>REVIEW</scope>
</reference>
<reference key="5">
    <citation type="journal article" date="2006" name="Cancer Sci.">
        <title>Hepatitis B virus pre-S mutants, endoplasmic reticulum stress and hepatocarcinogenesis.</title>
        <authorList>
            <person name="Wang H.C."/>
            <person name="Huang W."/>
            <person name="Lai M.D."/>
            <person name="Su I.J."/>
        </authorList>
    </citation>
    <scope>REVIEW</scope>
</reference>
<keyword id="KW-0007">Acetylation</keyword>
<keyword id="KW-0024">Alternative initiation</keyword>
<keyword id="KW-0025">Alternative splicing</keyword>
<keyword id="KW-1166">Caveolin-mediated endocytosis of virus by host</keyword>
<keyword id="KW-1170">Fusion of virus membrane with host endosomal membrane</keyword>
<keyword id="KW-1168">Fusion of virus membrane with host membrane</keyword>
<keyword id="KW-0325">Glycoprotein</keyword>
<keyword id="KW-0945">Host-virus interaction</keyword>
<keyword id="KW-0449">Lipoprotein</keyword>
<keyword id="KW-0472">Membrane</keyword>
<keyword id="KW-0519">Myristate</keyword>
<keyword id="KW-0812">Transmembrane</keyword>
<keyword id="KW-1133">Transmembrane helix</keyword>
<keyword id="KW-1161">Viral attachment to host cell</keyword>
<keyword id="KW-0261">Viral envelope protein</keyword>
<keyword id="KW-1162">Viral penetration into host cytoplasm</keyword>
<keyword id="KW-0946">Virion</keyword>
<keyword id="KW-1164">Virus endocytosis by host</keyword>
<keyword id="KW-1160">Virus entry into host cell</keyword>
<gene>
    <name evidence="3" type="primary">S</name>
</gene>
<proteinExistence type="evidence at protein level"/>
<organism>
    <name type="scientific">Hepatitis B virus genotype E (isolate Cote d'Ivoire/ABI-129/2003)</name>
    <name type="common">HBV-E</name>
    <dbReference type="NCBI Taxonomy" id="489496"/>
    <lineage>
        <taxon>Viruses</taxon>
        <taxon>Riboviria</taxon>
        <taxon>Pararnavirae</taxon>
        <taxon>Artverviricota</taxon>
        <taxon>Revtraviricetes</taxon>
        <taxon>Blubervirales</taxon>
        <taxon>Hepadnaviridae</taxon>
        <taxon>Orthohepadnavirus</taxon>
        <taxon>Hepatitis B virus</taxon>
        <taxon>hepatitis B virus genotype E</taxon>
    </lineage>
</organism>
<sequence length="399" mass="43889">MGLSWTVPLEWGKNHSTTNPLGFFPDHQLDPAFRANTRNPDWDHNPNKDHWTEANKVGVGAFGPGFTPPHGGLLGWSPQAQGMLKTLPADPPPASTNRQSGRQPTPITPPLRDTHPQAMQWNSTTFHQALQDPRVRGLYFPAGGSSSGTVNPVPTTASLISSIFSRIGDPAPNMEGITSGFLGPLLVLQAGFFLLTKILTIPQSLDSWWTSLNFLGGAPVCLGQNSQSPTSNHSPTSCPPICPGYRWMCLRRFIIFLFILLLCLIFLLVLLGYQGMLPVCPLIPGSSTTSTGPCRTCTTLAQGTSMFPSCCCSKPSDGNCTCIPIPSSWAFGKFLWEWASARFSWLSLLVPFVQWFAGLSPTVWLSVIWMMWYWGPSLYNILSPFIPLLPIFFCLWVYI</sequence>
<feature type="initiator methionine" description="Removed; by host" evidence="3">
    <location>
        <position position="1"/>
    </location>
</feature>
<feature type="chain" id="PRO_0000319090" description="Large envelope protein" evidence="3">
    <location>
        <begin position="2"/>
        <end position="399"/>
    </location>
</feature>
<feature type="topological domain" description="Intravirion; in internal conformation" evidence="3">
    <location>
        <begin position="2"/>
        <end position="252"/>
    </location>
</feature>
<feature type="topological domain" description="Virion surface; in external conformation" evidence="3">
    <location>
        <begin position="2"/>
        <end position="180"/>
    </location>
</feature>
<feature type="transmembrane region" description="Helical; Name=TM1; Note=In external conformation" evidence="3">
    <location>
        <begin position="181"/>
        <end position="201"/>
    </location>
</feature>
<feature type="topological domain" description="Intravirion; in external conformation" evidence="3">
    <location>
        <begin position="202"/>
        <end position="252"/>
    </location>
</feature>
<feature type="transmembrane region" description="Helical; Name=TM2" evidence="3">
    <location>
        <begin position="253"/>
        <end position="273"/>
    </location>
</feature>
<feature type="topological domain" description="Virion surface" evidence="3">
    <location>
        <begin position="274"/>
        <end position="347"/>
    </location>
</feature>
<feature type="transmembrane region" description="Helical" evidence="3">
    <location>
        <begin position="348"/>
        <end position="368"/>
    </location>
</feature>
<feature type="topological domain" description="Intravirion" evidence="3">
    <location>
        <begin position="369"/>
        <end position="374"/>
    </location>
</feature>
<feature type="transmembrane region" description="Helical; Name=TM3" evidence="3">
    <location>
        <begin position="375"/>
        <end position="397"/>
    </location>
</feature>
<feature type="topological domain" description="Virion surface" evidence="3">
    <location>
        <begin position="398"/>
        <end position="399"/>
    </location>
</feature>
<feature type="region of interest" description="Pre-S" evidence="3">
    <location>
        <begin position="2"/>
        <end position="173"/>
    </location>
</feature>
<feature type="region of interest" description="Pre-S1" evidence="3">
    <location>
        <begin position="2"/>
        <end position="118"/>
    </location>
</feature>
<feature type="region of interest" description="Disordered" evidence="4">
    <location>
        <begin position="85"/>
        <end position="109"/>
    </location>
</feature>
<feature type="region of interest" description="Pre-S2" evidence="3">
    <location>
        <begin position="119"/>
        <end position="173"/>
    </location>
</feature>
<feature type="compositionally biased region" description="Polar residues" evidence="4">
    <location>
        <begin position="95"/>
        <end position="105"/>
    </location>
</feature>
<feature type="lipid moiety-binding region" description="N-myristoyl glycine; by host" evidence="3">
    <location>
        <position position="2"/>
    </location>
</feature>
<feature type="glycosylation site" description="N-linked (GlcNAc...) asparagine; by host" evidence="3">
    <location>
        <position position="319"/>
    </location>
</feature>
<feature type="splice variant" id="VSP_031415" description="In isoform S." evidence="5">
    <location>
        <begin position="1"/>
        <end position="173"/>
    </location>
</feature>
<feature type="splice variant" id="VSP_031416" description="In isoform M." evidence="5">
    <location>
        <begin position="1"/>
        <end position="118"/>
    </location>
</feature>
<feature type="modified residue" description="N-acetylmethionine" evidence="5">
    <location sequence="Q80IU6-2">
        <position position="1"/>
    </location>
</feature>
<feature type="glycosylation site" description="N-linked (GlcNAc...) asparagine" evidence="5">
    <location sequence="Q80IU6-2">
        <position position="4"/>
    </location>
</feature>
<dbReference type="EMBL" id="AB091255">
    <property type="protein sequence ID" value="BAC65105.1"/>
    <property type="molecule type" value="Genomic_DNA"/>
</dbReference>
<dbReference type="SMR" id="Q80IU6"/>
<dbReference type="GlyCosmos" id="Q80IU6">
    <property type="glycosylation" value="2 sites, No reported glycans"/>
</dbReference>
<dbReference type="Proteomes" id="UP000001387">
    <property type="component" value="Genome"/>
</dbReference>
<dbReference type="GO" id="GO:0016020">
    <property type="term" value="C:membrane"/>
    <property type="evidence" value="ECO:0007669"/>
    <property type="project" value="UniProtKB-UniRule"/>
</dbReference>
<dbReference type="GO" id="GO:0019031">
    <property type="term" value="C:viral envelope"/>
    <property type="evidence" value="ECO:0007669"/>
    <property type="project" value="UniProtKB-KW"/>
</dbReference>
<dbReference type="GO" id="GO:0055036">
    <property type="term" value="C:virion membrane"/>
    <property type="evidence" value="ECO:0007669"/>
    <property type="project" value="UniProtKB-SubCell"/>
</dbReference>
<dbReference type="GO" id="GO:0075513">
    <property type="term" value="P:caveolin-mediated endocytosis of virus by host cell"/>
    <property type="evidence" value="ECO:0007669"/>
    <property type="project" value="UniProtKB-KW"/>
</dbReference>
<dbReference type="GO" id="GO:0039654">
    <property type="term" value="P:fusion of virus membrane with host endosome membrane"/>
    <property type="evidence" value="ECO:0007669"/>
    <property type="project" value="UniProtKB-KW"/>
</dbReference>
<dbReference type="GO" id="GO:0019062">
    <property type="term" value="P:virion attachment to host cell"/>
    <property type="evidence" value="ECO:0007669"/>
    <property type="project" value="UniProtKB-UniRule"/>
</dbReference>
<dbReference type="HAMAP" id="MF_04075">
    <property type="entry name" value="HBV_HBSAG"/>
    <property type="match status" value="1"/>
</dbReference>
<dbReference type="InterPro" id="IPR000349">
    <property type="entry name" value="HBV_HBSAG"/>
</dbReference>
<dbReference type="Pfam" id="PF00695">
    <property type="entry name" value="vMSA"/>
    <property type="match status" value="1"/>
</dbReference>
<comment type="function">
    <text evidence="3">The large envelope protein exists in two topological conformations, one which is termed 'external' or Le-HBsAg and the other 'internal' or Li-HBsAg. In its external conformation the protein attaches the virus to cell receptors and thereby initiating infection. This interaction determines the species specificity and liver tropism. This attachment induces virion internalization predominantly through caveolin-mediated endocytosis. The large envelope protein also assures fusion between virion membrane and endosomal membrane. In its internal conformation the protein plays a role in virion morphogenesis and mediates the contact with the nucleocapsid like a matrix protein.</text>
</comment>
<comment type="function">
    <text evidence="3">The middle envelope protein plays an important role in the budding of the virion. It is involved in the induction of budding in a nucleocapsid independent way. In this process the majority of envelope proteins bud to form subviral lipoprotein particles of 22 nm of diameter that do not contain a nucleocapsid.</text>
</comment>
<comment type="subunit">
    <molecule>Isoform L</molecule>
    <text evidence="2">In its internal form (Li-HBsAg), interacts with the capsid protein and with the isoform S. Interacts with host chaperone CANX.</text>
</comment>
<comment type="subunit">
    <molecule>Isoform M</molecule>
    <text evidence="2">Associates with host chaperone CANX through its pre-S2 N glycan; this association may be essential for isoform M proper secretion.</text>
</comment>
<comment type="subunit">
    <molecule>Isoform S</molecule>
    <text evidence="2">Interacts with isoform L. Interacts with the antigens of satellite virus HDV (HDVAgs); this interaction is required for encapsidation of HDV genomic RNA.</text>
</comment>
<comment type="subcellular location">
    <subcellularLocation>
        <location evidence="3">Virion membrane</location>
    </subcellularLocation>
</comment>
<comment type="alternative products">
    <event type="alternative splicing"/>
    <event type="alternative initiation"/>
    <isoform>
        <id>Q80IU6-1</id>
        <name>L</name>
        <name>Large envelope protein</name>
        <name>LHB</name>
        <name>L-HBsAg</name>
        <sequence type="displayed"/>
    </isoform>
    <isoform>
        <id>Q80IU6-2</id>
        <name>M</name>
        <name>Middle envelope protein</name>
        <name>MHB</name>
        <name>M-HBsAg</name>
        <sequence type="described" ref="VSP_031416"/>
    </isoform>
    <isoform>
        <id>Q80IU6-3</id>
        <name>S</name>
        <name>Small envelope protein</name>
        <name>SHB</name>
        <name>S-HBsAg</name>
        <sequence type="described" ref="VSP_031415"/>
    </isoform>
</comment>
<comment type="domain">
    <text evidence="3">The large envelope protein is synthesized with the pre-S region at the cytosolic side of the endoplasmic reticulum and, hence will be within the virion after budding. Therefore the pre-S region is not N-glycosylated. Later a post-translational translocation of N-terminal pre-S and TM1 domains occur in about 50% of proteins at the virion surface. These molecules change their topology by an unknown mechanism, resulting in exposure of pre-S region at virion surface. For isoform M in contrast, the pre-S2 region is translocated cotranslationally to the endoplasmic reticulum lumen and is N-glycosylated.</text>
</comment>
<comment type="PTM">
    <text evidence="1 3">Isoform M is N-terminally acetylated by host at a ratio of 90%, and N-glycosylated by host at the pre-S2 region.</text>
</comment>
<comment type="PTM">
    <text evidence="3">Myristoylated.</text>
</comment>
<comment type="biotechnology">
    <text>Systematic vaccination of individuals at risk of exposure to the virus has been the main method of controlling the morbidity and mortality associated with hepatitis B. The first hepatitis B vaccine was manufactured by the purification and inactivation of HBsAg obtained from the plasma of chronic hepatitis B virus carriers. The vaccine is now produced by recombinant DNA techniques and expression of the S isoform in yeast cells. The pre-S region do not seem to induce strong enough antigenic response.</text>
</comment>
<comment type="similarity">
    <text evidence="3">Belongs to the orthohepadnavirus major surface antigen family.</text>
</comment>
<evidence type="ECO:0000250" key="1">
    <source>
        <dbReference type="UniProtKB" id="P03138"/>
    </source>
</evidence>
<evidence type="ECO:0000250" key="2">
    <source>
        <dbReference type="UniProtKB" id="P03141"/>
    </source>
</evidence>
<evidence type="ECO:0000255" key="3">
    <source>
        <dbReference type="HAMAP-Rule" id="MF_04075"/>
    </source>
</evidence>
<evidence type="ECO:0000256" key="4">
    <source>
        <dbReference type="SAM" id="MobiDB-lite"/>
    </source>
</evidence>
<evidence type="ECO:0000305" key="5"/>
<accession>Q80IU6</accession>
<name>HBSAG_HBVE2</name>
<organismHost>
    <name type="scientific">Homo sapiens</name>
    <name type="common">Human</name>
    <dbReference type="NCBI Taxonomy" id="9606"/>
</organismHost>
<organismHost>
    <name type="scientific">Pan troglodytes</name>
    <name type="common">Chimpanzee</name>
    <dbReference type="NCBI Taxonomy" id="9598"/>
</organismHost>
<protein>
    <recommendedName>
        <fullName evidence="3">Large envelope protein</fullName>
    </recommendedName>
    <alternativeName>
        <fullName evidence="3">L glycoprotein</fullName>
    </alternativeName>
    <alternativeName>
        <fullName evidence="3">L-HBsAg</fullName>
        <shortName evidence="3">LHB</shortName>
    </alternativeName>
    <alternativeName>
        <fullName evidence="3">Large S protein</fullName>
    </alternativeName>
    <alternativeName>
        <fullName evidence="3">Large surface protein</fullName>
    </alternativeName>
    <alternativeName>
        <fullName evidence="3">Major surface antigen</fullName>
    </alternativeName>
</protein>